<dbReference type="EC" id="6.1.1.15" evidence="1"/>
<dbReference type="EMBL" id="CP001344">
    <property type="protein sequence ID" value="ACL43728.1"/>
    <property type="molecule type" value="Genomic_DNA"/>
</dbReference>
<dbReference type="SMR" id="B8HNJ7"/>
<dbReference type="STRING" id="395961.Cyan7425_1354"/>
<dbReference type="KEGG" id="cyn:Cyan7425_1354"/>
<dbReference type="eggNOG" id="COG0442">
    <property type="taxonomic scope" value="Bacteria"/>
</dbReference>
<dbReference type="HOGENOM" id="CLU_016739_0_0_3"/>
<dbReference type="OrthoDB" id="9809052at2"/>
<dbReference type="GO" id="GO:0005829">
    <property type="term" value="C:cytosol"/>
    <property type="evidence" value="ECO:0007669"/>
    <property type="project" value="TreeGrafter"/>
</dbReference>
<dbReference type="GO" id="GO:0002161">
    <property type="term" value="F:aminoacyl-tRNA deacylase activity"/>
    <property type="evidence" value="ECO:0007669"/>
    <property type="project" value="InterPro"/>
</dbReference>
<dbReference type="GO" id="GO:0005524">
    <property type="term" value="F:ATP binding"/>
    <property type="evidence" value="ECO:0007669"/>
    <property type="project" value="UniProtKB-UniRule"/>
</dbReference>
<dbReference type="GO" id="GO:0004827">
    <property type="term" value="F:proline-tRNA ligase activity"/>
    <property type="evidence" value="ECO:0007669"/>
    <property type="project" value="UniProtKB-UniRule"/>
</dbReference>
<dbReference type="GO" id="GO:0006433">
    <property type="term" value="P:prolyl-tRNA aminoacylation"/>
    <property type="evidence" value="ECO:0007669"/>
    <property type="project" value="UniProtKB-UniRule"/>
</dbReference>
<dbReference type="CDD" id="cd04334">
    <property type="entry name" value="ProRS-INS"/>
    <property type="match status" value="1"/>
</dbReference>
<dbReference type="CDD" id="cd00861">
    <property type="entry name" value="ProRS_anticodon_short"/>
    <property type="match status" value="1"/>
</dbReference>
<dbReference type="CDD" id="cd00779">
    <property type="entry name" value="ProRS_core_prok"/>
    <property type="match status" value="1"/>
</dbReference>
<dbReference type="Gene3D" id="3.40.50.800">
    <property type="entry name" value="Anticodon-binding domain"/>
    <property type="match status" value="1"/>
</dbReference>
<dbReference type="Gene3D" id="3.30.930.10">
    <property type="entry name" value="Bira Bifunctional Protein, Domain 2"/>
    <property type="match status" value="2"/>
</dbReference>
<dbReference type="HAMAP" id="MF_01569">
    <property type="entry name" value="Pro_tRNA_synth_type1"/>
    <property type="match status" value="1"/>
</dbReference>
<dbReference type="InterPro" id="IPR002314">
    <property type="entry name" value="aa-tRNA-synt_IIb"/>
</dbReference>
<dbReference type="InterPro" id="IPR006195">
    <property type="entry name" value="aa-tRNA-synth_II"/>
</dbReference>
<dbReference type="InterPro" id="IPR045864">
    <property type="entry name" value="aa-tRNA-synth_II/BPL/LPL"/>
</dbReference>
<dbReference type="InterPro" id="IPR004154">
    <property type="entry name" value="Anticodon-bd"/>
</dbReference>
<dbReference type="InterPro" id="IPR036621">
    <property type="entry name" value="Anticodon-bd_dom_sf"/>
</dbReference>
<dbReference type="InterPro" id="IPR002316">
    <property type="entry name" value="Pro-tRNA-ligase_IIa"/>
</dbReference>
<dbReference type="InterPro" id="IPR004500">
    <property type="entry name" value="Pro-tRNA-synth_IIa_bac-type"/>
</dbReference>
<dbReference type="InterPro" id="IPR023717">
    <property type="entry name" value="Pro-tRNA-Synthase_IIa_type1"/>
</dbReference>
<dbReference type="InterPro" id="IPR050062">
    <property type="entry name" value="Pro-tRNA_synthetase"/>
</dbReference>
<dbReference type="InterPro" id="IPR044140">
    <property type="entry name" value="ProRS_anticodon_short"/>
</dbReference>
<dbReference type="InterPro" id="IPR033730">
    <property type="entry name" value="ProRS_core_prok"/>
</dbReference>
<dbReference type="InterPro" id="IPR036754">
    <property type="entry name" value="YbaK/aa-tRNA-synt-asso_dom_sf"/>
</dbReference>
<dbReference type="InterPro" id="IPR007214">
    <property type="entry name" value="YbaK/aa-tRNA-synth-assoc-dom"/>
</dbReference>
<dbReference type="NCBIfam" id="NF006625">
    <property type="entry name" value="PRK09194.1"/>
    <property type="match status" value="1"/>
</dbReference>
<dbReference type="NCBIfam" id="TIGR00409">
    <property type="entry name" value="proS_fam_II"/>
    <property type="match status" value="1"/>
</dbReference>
<dbReference type="PANTHER" id="PTHR42753">
    <property type="entry name" value="MITOCHONDRIAL RIBOSOME PROTEIN L39/PROLYL-TRNA LIGASE FAMILY MEMBER"/>
    <property type="match status" value="1"/>
</dbReference>
<dbReference type="PANTHER" id="PTHR42753:SF2">
    <property type="entry name" value="PROLINE--TRNA LIGASE"/>
    <property type="match status" value="1"/>
</dbReference>
<dbReference type="Pfam" id="PF03129">
    <property type="entry name" value="HGTP_anticodon"/>
    <property type="match status" value="1"/>
</dbReference>
<dbReference type="Pfam" id="PF00587">
    <property type="entry name" value="tRNA-synt_2b"/>
    <property type="match status" value="1"/>
</dbReference>
<dbReference type="Pfam" id="PF04073">
    <property type="entry name" value="tRNA_edit"/>
    <property type="match status" value="1"/>
</dbReference>
<dbReference type="PRINTS" id="PR01046">
    <property type="entry name" value="TRNASYNTHPRO"/>
</dbReference>
<dbReference type="SUPFAM" id="SSF52954">
    <property type="entry name" value="Class II aaRS ABD-related"/>
    <property type="match status" value="1"/>
</dbReference>
<dbReference type="SUPFAM" id="SSF55681">
    <property type="entry name" value="Class II aaRS and biotin synthetases"/>
    <property type="match status" value="1"/>
</dbReference>
<dbReference type="SUPFAM" id="SSF55826">
    <property type="entry name" value="YbaK/ProRS associated domain"/>
    <property type="match status" value="1"/>
</dbReference>
<dbReference type="PROSITE" id="PS50862">
    <property type="entry name" value="AA_TRNA_LIGASE_II"/>
    <property type="match status" value="1"/>
</dbReference>
<sequence length="613" mass="67714">MRLSQMLFVTLREDPAEAEIPSHKLLLRAGYIRRIGSGVYAYLPLMWRVLGKVSQIVRQEMNAAGAQECLLPQIQPAELWQESGRWDTYTKAEGIMFALTDRQDRQLGLGPTHEEVITTIARDLIRTYRQLPQNLYQIQTKFRDEIRPRFGLMRGREFIMKDAYSFDADVESLRVAYGKMHQAYCNILQRCGLKYRAVDADSGAIGGSGSQEFMVLADAGEDEVLYTEDGRYAANVEKAISLPVDAEPSGLTKFEKRETPGTDTIDKLCQFLKCSPTQVVKNVLYQAVYDNGQTVLVLVSIRGDQEVNEVKLQNELVKLAGKFGGKTVLALTVPDAEMQSKWASQSLPLGYIAPDLADSYIAATKDIHPQFVRLVDQTAVDLKNFVTGANESGYHVVGANWAEAKGKKTKAKSGEFALPDGVVDVRKARPGDRALHNPEQTLKTARGIEIGHIFQLGTKYSQAMGATYTNEQGEEVPLVMGCYGIGVSRLAQAAVEQSYDKDGIIWPVAIAPYQAIVVIPNLNETTQVEAATQLYQDLNAAGIETLLDDRNERAGVKFKDADLIGIPYRIVTGRSLAQGKVEVVQRASRSSTEIALDQVIPTLKEWIAAACPS</sequence>
<protein>
    <recommendedName>
        <fullName evidence="1">Proline--tRNA ligase</fullName>
        <ecNumber evidence="1">6.1.1.15</ecNumber>
    </recommendedName>
    <alternativeName>
        <fullName evidence="1">Prolyl-tRNA synthetase</fullName>
        <shortName evidence="1">ProRS</shortName>
    </alternativeName>
</protein>
<gene>
    <name evidence="1" type="primary">proS</name>
    <name type="ordered locus">Cyan7425_1354</name>
</gene>
<organism>
    <name type="scientific">Cyanothece sp. (strain PCC 7425 / ATCC 29141)</name>
    <dbReference type="NCBI Taxonomy" id="395961"/>
    <lineage>
        <taxon>Bacteria</taxon>
        <taxon>Bacillati</taxon>
        <taxon>Cyanobacteriota</taxon>
        <taxon>Cyanophyceae</taxon>
        <taxon>Gomontiellales</taxon>
        <taxon>Cyanothecaceae</taxon>
        <taxon>Cyanothece</taxon>
    </lineage>
</organism>
<proteinExistence type="inferred from homology"/>
<comment type="function">
    <text evidence="1">Catalyzes the attachment of proline to tRNA(Pro) in a two-step reaction: proline is first activated by ATP to form Pro-AMP and then transferred to the acceptor end of tRNA(Pro). As ProRS can inadvertently accommodate and process non-cognate amino acids such as alanine and cysteine, to avoid such errors it has two additional distinct editing activities against alanine. One activity is designated as 'pretransfer' editing and involves the tRNA(Pro)-independent hydrolysis of activated Ala-AMP. The other activity is designated 'posttransfer' editing and involves deacylation of mischarged Ala-tRNA(Pro). The misacylated Cys-tRNA(Pro) is not edited by ProRS.</text>
</comment>
<comment type="catalytic activity">
    <reaction evidence="1">
        <text>tRNA(Pro) + L-proline + ATP = L-prolyl-tRNA(Pro) + AMP + diphosphate</text>
        <dbReference type="Rhea" id="RHEA:14305"/>
        <dbReference type="Rhea" id="RHEA-COMP:9700"/>
        <dbReference type="Rhea" id="RHEA-COMP:9702"/>
        <dbReference type="ChEBI" id="CHEBI:30616"/>
        <dbReference type="ChEBI" id="CHEBI:33019"/>
        <dbReference type="ChEBI" id="CHEBI:60039"/>
        <dbReference type="ChEBI" id="CHEBI:78442"/>
        <dbReference type="ChEBI" id="CHEBI:78532"/>
        <dbReference type="ChEBI" id="CHEBI:456215"/>
        <dbReference type="EC" id="6.1.1.15"/>
    </reaction>
</comment>
<comment type="subunit">
    <text evidence="1">Homodimer.</text>
</comment>
<comment type="subcellular location">
    <subcellularLocation>
        <location evidence="1">Cytoplasm</location>
    </subcellularLocation>
</comment>
<comment type="domain">
    <text evidence="1">Consists of three domains: the N-terminal catalytic domain, the editing domain and the C-terminal anticodon-binding domain.</text>
</comment>
<comment type="similarity">
    <text evidence="1">Belongs to the class-II aminoacyl-tRNA synthetase family. ProS type 1 subfamily.</text>
</comment>
<reference key="1">
    <citation type="journal article" date="2011" name="MBio">
        <title>Novel metabolic attributes of the genus Cyanothece, comprising a group of unicellular nitrogen-fixing Cyanobacteria.</title>
        <authorList>
            <person name="Bandyopadhyay A."/>
            <person name="Elvitigala T."/>
            <person name="Welsh E."/>
            <person name="Stockel J."/>
            <person name="Liberton M."/>
            <person name="Min H."/>
            <person name="Sherman L.A."/>
            <person name="Pakrasi H.B."/>
        </authorList>
    </citation>
    <scope>NUCLEOTIDE SEQUENCE [LARGE SCALE GENOMIC DNA]</scope>
    <source>
        <strain>PCC 7425 / ATCC 29141</strain>
    </source>
</reference>
<accession>B8HNJ7</accession>
<evidence type="ECO:0000255" key="1">
    <source>
        <dbReference type="HAMAP-Rule" id="MF_01569"/>
    </source>
</evidence>
<name>SYP_CYAP4</name>
<keyword id="KW-0030">Aminoacyl-tRNA synthetase</keyword>
<keyword id="KW-0067">ATP-binding</keyword>
<keyword id="KW-0963">Cytoplasm</keyword>
<keyword id="KW-0436">Ligase</keyword>
<keyword id="KW-0547">Nucleotide-binding</keyword>
<keyword id="KW-0648">Protein biosynthesis</keyword>
<feature type="chain" id="PRO_1000185495" description="Proline--tRNA ligase">
    <location>
        <begin position="1"/>
        <end position="613"/>
    </location>
</feature>